<evidence type="ECO:0000255" key="1">
    <source>
        <dbReference type="HAMAP-Rule" id="MF_00381"/>
    </source>
</evidence>
<evidence type="ECO:0000256" key="2">
    <source>
        <dbReference type="SAM" id="MobiDB-lite"/>
    </source>
</evidence>
<proteinExistence type="inferred from homology"/>
<name>IHFB_XANAC</name>
<gene>
    <name evidence="1" type="primary">ihfB</name>
    <name evidence="1" type="synonym">himD</name>
    <name type="ordered locus">XAC2297</name>
</gene>
<sequence length="103" mass="11373">MTKSELIEILARRQAHLKSDDVDLAVKSLLEMMGQALSDGDRIEIRGFGSFSLHYRPPRLGRNPKTGESVALPGKHVPHFKPGKELRERVSSVVPVDVADTAD</sequence>
<protein>
    <recommendedName>
        <fullName evidence="1">Integration host factor subunit beta</fullName>
        <shortName evidence="1">IHF-beta</shortName>
    </recommendedName>
</protein>
<reference key="1">
    <citation type="journal article" date="2002" name="Nature">
        <title>Comparison of the genomes of two Xanthomonas pathogens with differing host specificities.</title>
        <authorList>
            <person name="da Silva A.C.R."/>
            <person name="Ferro J.A."/>
            <person name="Reinach F.C."/>
            <person name="Farah C.S."/>
            <person name="Furlan L.R."/>
            <person name="Quaggio R.B."/>
            <person name="Monteiro-Vitorello C.B."/>
            <person name="Van Sluys M.A."/>
            <person name="Almeida N.F. Jr."/>
            <person name="Alves L.M.C."/>
            <person name="do Amaral A.M."/>
            <person name="Bertolini M.C."/>
            <person name="Camargo L.E.A."/>
            <person name="Camarotte G."/>
            <person name="Cannavan F."/>
            <person name="Cardozo J."/>
            <person name="Chambergo F."/>
            <person name="Ciapina L.P."/>
            <person name="Cicarelli R.M.B."/>
            <person name="Coutinho L.L."/>
            <person name="Cursino-Santos J.R."/>
            <person name="El-Dorry H."/>
            <person name="Faria J.B."/>
            <person name="Ferreira A.J.S."/>
            <person name="Ferreira R.C.C."/>
            <person name="Ferro M.I.T."/>
            <person name="Formighieri E.F."/>
            <person name="Franco M.C."/>
            <person name="Greggio C.C."/>
            <person name="Gruber A."/>
            <person name="Katsuyama A.M."/>
            <person name="Kishi L.T."/>
            <person name="Leite R.P."/>
            <person name="Lemos E.G.M."/>
            <person name="Lemos M.V.F."/>
            <person name="Locali E.C."/>
            <person name="Machado M.A."/>
            <person name="Madeira A.M.B.N."/>
            <person name="Martinez-Rossi N.M."/>
            <person name="Martins E.C."/>
            <person name="Meidanis J."/>
            <person name="Menck C.F.M."/>
            <person name="Miyaki C.Y."/>
            <person name="Moon D.H."/>
            <person name="Moreira L.M."/>
            <person name="Novo M.T.M."/>
            <person name="Okura V.K."/>
            <person name="Oliveira M.C."/>
            <person name="Oliveira V.R."/>
            <person name="Pereira H.A."/>
            <person name="Rossi A."/>
            <person name="Sena J.A.D."/>
            <person name="Silva C."/>
            <person name="de Souza R.F."/>
            <person name="Spinola L.A.F."/>
            <person name="Takita M.A."/>
            <person name="Tamura R.E."/>
            <person name="Teixeira E.C."/>
            <person name="Tezza R.I.D."/>
            <person name="Trindade dos Santos M."/>
            <person name="Truffi D."/>
            <person name="Tsai S.M."/>
            <person name="White F.F."/>
            <person name="Setubal J.C."/>
            <person name="Kitajima J.P."/>
        </authorList>
    </citation>
    <scope>NUCLEOTIDE SEQUENCE [LARGE SCALE GENOMIC DNA]</scope>
    <source>
        <strain>306</strain>
    </source>
</reference>
<comment type="function">
    <text evidence="1">This protein is one of the two subunits of integration host factor, a specific DNA-binding protein that functions in genetic recombination as well as in transcriptional and translational control.</text>
</comment>
<comment type="subunit">
    <text evidence="1">Heterodimer of an alpha and a beta chain.</text>
</comment>
<comment type="similarity">
    <text evidence="1">Belongs to the bacterial histone-like protein family.</text>
</comment>
<feature type="chain" id="PRO_0000105077" description="Integration host factor subunit beta">
    <location>
        <begin position="1"/>
        <end position="103"/>
    </location>
</feature>
<feature type="region of interest" description="Disordered" evidence="2">
    <location>
        <begin position="62"/>
        <end position="81"/>
    </location>
</feature>
<organism>
    <name type="scientific">Xanthomonas axonopodis pv. citri (strain 306)</name>
    <dbReference type="NCBI Taxonomy" id="190486"/>
    <lineage>
        <taxon>Bacteria</taxon>
        <taxon>Pseudomonadati</taxon>
        <taxon>Pseudomonadota</taxon>
        <taxon>Gammaproteobacteria</taxon>
        <taxon>Lysobacterales</taxon>
        <taxon>Lysobacteraceae</taxon>
        <taxon>Xanthomonas</taxon>
    </lineage>
</organism>
<keyword id="KW-0233">DNA recombination</keyword>
<keyword id="KW-0238">DNA-binding</keyword>
<keyword id="KW-0804">Transcription</keyword>
<keyword id="KW-0805">Transcription regulation</keyword>
<keyword id="KW-0810">Translation regulation</keyword>
<accession>Q8PK78</accession>
<dbReference type="EMBL" id="AE008923">
    <property type="protein sequence ID" value="AAM37150.1"/>
    <property type="molecule type" value="Genomic_DNA"/>
</dbReference>
<dbReference type="RefSeq" id="WP_003489651.1">
    <property type="nucleotide sequence ID" value="NC_003919.1"/>
</dbReference>
<dbReference type="SMR" id="Q8PK78"/>
<dbReference type="KEGG" id="xac:XAC2297"/>
<dbReference type="eggNOG" id="COG0776">
    <property type="taxonomic scope" value="Bacteria"/>
</dbReference>
<dbReference type="HOGENOM" id="CLU_105066_2_0_6"/>
<dbReference type="Proteomes" id="UP000000576">
    <property type="component" value="Chromosome"/>
</dbReference>
<dbReference type="GO" id="GO:0005694">
    <property type="term" value="C:chromosome"/>
    <property type="evidence" value="ECO:0007669"/>
    <property type="project" value="InterPro"/>
</dbReference>
<dbReference type="GO" id="GO:0005829">
    <property type="term" value="C:cytosol"/>
    <property type="evidence" value="ECO:0007669"/>
    <property type="project" value="TreeGrafter"/>
</dbReference>
<dbReference type="GO" id="GO:0003677">
    <property type="term" value="F:DNA binding"/>
    <property type="evidence" value="ECO:0007669"/>
    <property type="project" value="UniProtKB-UniRule"/>
</dbReference>
<dbReference type="GO" id="GO:0030527">
    <property type="term" value="F:structural constituent of chromatin"/>
    <property type="evidence" value="ECO:0007669"/>
    <property type="project" value="InterPro"/>
</dbReference>
<dbReference type="GO" id="GO:0006310">
    <property type="term" value="P:DNA recombination"/>
    <property type="evidence" value="ECO:0007669"/>
    <property type="project" value="UniProtKB-UniRule"/>
</dbReference>
<dbReference type="GO" id="GO:0006355">
    <property type="term" value="P:regulation of DNA-templated transcription"/>
    <property type="evidence" value="ECO:0007669"/>
    <property type="project" value="UniProtKB-UniRule"/>
</dbReference>
<dbReference type="GO" id="GO:0006417">
    <property type="term" value="P:regulation of translation"/>
    <property type="evidence" value="ECO:0007669"/>
    <property type="project" value="UniProtKB-UniRule"/>
</dbReference>
<dbReference type="CDD" id="cd13836">
    <property type="entry name" value="IHF_B"/>
    <property type="match status" value="1"/>
</dbReference>
<dbReference type="FunFam" id="4.10.520.10:FF:000003">
    <property type="entry name" value="Integration host factor subunit beta"/>
    <property type="match status" value="1"/>
</dbReference>
<dbReference type="Gene3D" id="4.10.520.10">
    <property type="entry name" value="IHF-like DNA-binding proteins"/>
    <property type="match status" value="1"/>
</dbReference>
<dbReference type="HAMAP" id="MF_00381">
    <property type="entry name" value="IHF_beta"/>
    <property type="match status" value="1"/>
</dbReference>
<dbReference type="InterPro" id="IPR000119">
    <property type="entry name" value="Hist_DNA-bd"/>
</dbReference>
<dbReference type="InterPro" id="IPR020816">
    <property type="entry name" value="Histone-like_DNA-bd_CS"/>
</dbReference>
<dbReference type="InterPro" id="IPR010992">
    <property type="entry name" value="IHF-like_DNA-bd_dom_sf"/>
</dbReference>
<dbReference type="InterPro" id="IPR005685">
    <property type="entry name" value="IHF_beta"/>
</dbReference>
<dbReference type="NCBIfam" id="TIGR00988">
    <property type="entry name" value="hip"/>
    <property type="match status" value="1"/>
</dbReference>
<dbReference type="NCBIfam" id="NF001222">
    <property type="entry name" value="PRK00199.1"/>
    <property type="match status" value="1"/>
</dbReference>
<dbReference type="PANTHER" id="PTHR33175">
    <property type="entry name" value="DNA-BINDING PROTEIN HU"/>
    <property type="match status" value="1"/>
</dbReference>
<dbReference type="PANTHER" id="PTHR33175:SF5">
    <property type="entry name" value="INTEGRATION HOST FACTOR SUBUNIT BETA"/>
    <property type="match status" value="1"/>
</dbReference>
<dbReference type="Pfam" id="PF00216">
    <property type="entry name" value="Bac_DNA_binding"/>
    <property type="match status" value="1"/>
</dbReference>
<dbReference type="PRINTS" id="PR01727">
    <property type="entry name" value="DNABINDINGHU"/>
</dbReference>
<dbReference type="SMART" id="SM00411">
    <property type="entry name" value="BHL"/>
    <property type="match status" value="1"/>
</dbReference>
<dbReference type="SUPFAM" id="SSF47729">
    <property type="entry name" value="IHF-like DNA-binding proteins"/>
    <property type="match status" value="1"/>
</dbReference>
<dbReference type="PROSITE" id="PS00045">
    <property type="entry name" value="HISTONE_LIKE"/>
    <property type="match status" value="1"/>
</dbReference>